<evidence type="ECO:0000250" key="1"/>
<evidence type="ECO:0000255" key="2"/>
<evidence type="ECO:0000255" key="3">
    <source>
        <dbReference type="PROSITE-ProRule" id="PRU01146"/>
    </source>
</evidence>
<evidence type="ECO:0000256" key="4">
    <source>
        <dbReference type="SAM" id="MobiDB-lite"/>
    </source>
</evidence>
<evidence type="ECO:0000269" key="5">
    <source>
    </source>
</evidence>
<evidence type="ECO:0000269" key="6">
    <source>
    </source>
</evidence>
<evidence type="ECO:0000269" key="7">
    <source>
    </source>
</evidence>
<evidence type="ECO:0000269" key="8">
    <source>
    </source>
</evidence>
<evidence type="ECO:0000269" key="9">
    <source>
    </source>
</evidence>
<evidence type="ECO:0000269" key="10">
    <source>
    </source>
</evidence>
<evidence type="ECO:0000303" key="11">
    <source>
    </source>
</evidence>
<evidence type="ECO:0000303" key="12">
    <source>
    </source>
</evidence>
<evidence type="ECO:0000303" key="13">
    <source>
    </source>
</evidence>
<evidence type="ECO:0000305" key="14"/>
<evidence type="ECO:0007744" key="15">
    <source>
    </source>
</evidence>
<evidence type="ECO:0007744" key="16">
    <source>
    </source>
</evidence>
<evidence type="ECO:0007744" key="17">
    <source>
    </source>
</evidence>
<evidence type="ECO:0007744" key="18">
    <source>
    </source>
</evidence>
<evidence type="ECO:0007744" key="19">
    <source>
    </source>
</evidence>
<evidence type="ECO:0007744" key="20">
    <source>
    </source>
</evidence>
<sequence>MQSFRERCGFHGKQQNYQQTSQETSRLENYRQPSQAGLSCDRQRLLAKDYYNPQPYPSYEGGAGTPSGTAAAVAADKYHRGSKALPTQQGLQGRPAFPGYGVQDSSPYPGRYAGEESLQAWGAPQPPPPQPQPLPAGVAKYDENLMKKTAVPPSRQYAEQGAQVPFRTHSLHVQQPPPPQQPLAYPKLQRQKLQNDIASPLPFPQGTHFPQHSQSFPTSSTYSSSVQGGGQGAHSYKSCTAPTAQPHDRPLTASSSLAPGQRVQNLHAYQSGRLSYDQQQQQQQQQQQQQQALQSRHHAQETLHYQNLAKYQHYGQQGQGYCQPDAAVRTPEQYYQTFSPSSSHSPARSVGRSPSYSSTPSPLMPNLENFPYSQQPLSTGAFPAGITDHSHFMPLLNPSPTDATSSVDTQAGNCKPLQKDKLPENLLSDLSLQSLTALTSQVENISNTVQQLLLSKAAVPQKKGVKNLVSRTPEQHKSQHCSPEGSGYSAEPAGTPLSEPPSSTPQSTHAEPQEADYLSGSEDPLERSFLYCNQARGSPARVNSNSKAKPESVSTCSVTSPDDMSTKSDDSFQSLHGSLPLDSFSKFVAGERDCPRLLLSALAQEDLASEILGLQEAIGEKADKAWAEAPSLVKDSSKPPFSLENHSACLDSVAKSAWPRPGEPEALPDSLQLDKGGNAKDFSPGLFEDPSVAFATPDPKKTTGPLSFGTKPTLGVPAPDPTTAAFDCFPDTTAASSADSANPFAWPEENLGDACPRWGLHPGELTKGLEQGGKASDGISKGDTHEASACLGFQEEDPPGEKVASLPGDFKQEEVGGVKEEAGGLLQCPEVAKADRWLEDSRHCCSTADFGDLPLLPPTSRKEDLEAEEEYSSLCELLGSPEQRPGMQDPLSPKAPLICTKEEVEEVLDSKAGWGSPCHLSGESVILLGPTVGTESKVQSWFESSLSHMKPGEEGPDGERAPGDSTTSDASLAQKPNKPAVPEAPIAKKEPVPRGKSLRSRRVHRGLPEAEDSPCRAPVLPKDLLLPESCTGPPQGQMEGAGAPGRGASEGLPRMCTRSLTALSEPRTPGPPGLTTTPAPPDKLGGKQRAAFKSGKRVGKPSPKAASSPSNPAALPVASDSSPMGSKTKETDSPSTPGKDQRSMILRSRTKTQEIFHSKRRRPSEGRLPNCRATKKLLDNSHLPATFKVSSSPQKEGRVSQRARVPKPGAGSKLSDRPLHALKRKSAFMAPVPTKKRNLVLRSRSSSSSNASGNGGDGKEERPEGSPTLFKRMSSPKKAKPTKGNGEPATKLPPPETPDACLKLASRAAFQGAMKTKVLPPRKGRGLKLEAIVQKITSPSLKKFACKAPGASPGNPLSPSLSDKDRGLKGAGGSPVGVEEGLVNVGTGQKLPTSGADPLCRNPTNRSLKGKLMNSKKLSSTDCFKTEAFTSPEALQPGGTALAPKKRSRKGRAGAHGLSKGPLEKRPYLGPALLLTPRDRASGTQGASEDNSGGGGKKPKMEELGLASQPPEGRPCQPQTRAQKQPGHTNYSSYSKRKRLTRGRAKNTTSSPCKGRAKRRRQQQVLPLDPAEPEIRLKYISSCKRLRSDSRTPAFSPFVRVEKRDAFTTICTVVNSPGDAPKPHRKPSSSASSSSSSSSFSLDAAGASLATLPGGSILQPRPSLPLSSTMHLGPVVSKALSTSCLVCCLCQNPANFKDLGDLCGPYYPEHCLPKKKPKLKEKVRPEGTCEEASLPLERTLKGPECAAAATAGKPPRPDGPADPAKQGPLRTSARGLSRRLQSCYCCDGREDGGEEAAPADKGRKHECSKEAPAEPGGEAQEHWVHEACAVWTGGVYLVAGKLFGLQEAMKVAVDMMCSSCQEAGATIGCCHKGCLHTYHYPCASDAGCIFIEENFSLKCPKHKRLP</sequence>
<comment type="function">
    <text evidence="9">Transcriptional regulator of the circadian clock components: CLOCK, BMAL1, BMAL2, PER1/3, CRY1/2, NR1D1/2 and RORA/C. Positively regulates the transcriptional activity of CLOCK a core component of the circadian clock. Regulates transcription through chromatin remodeling by interacting with other proteins in chromatin as well as proteins in the basic transcriptional machinery. May be important for embryonic and postnatal development. May be involved in neuronal differentiation.</text>
</comment>
<comment type="interaction">
    <interactant intactId="EBI-743815">
        <id>Q7Z5J4</id>
    </interactant>
    <interactant intactId="EBI-714158">
        <id>Q13526</id>
        <label>PIN1</label>
    </interactant>
    <organismsDiffer>false</organismsDiffer>
    <experiments>4</experiments>
</comment>
<comment type="subcellular location">
    <subcellularLocation>
        <location>Cytoplasm</location>
    </subcellularLocation>
    <subcellularLocation>
        <location>Nucleus</location>
    </subcellularLocation>
    <text evidence="1">In neurons, localized to neurites.</text>
</comment>
<comment type="alternative products">
    <event type="alternative splicing"/>
    <isoform>
        <id>Q7Z5J4-1</id>
        <name>1</name>
        <sequence type="displayed"/>
    </isoform>
    <isoform>
        <id>Q7Z5J4-2</id>
        <name>2</name>
        <sequence type="described" ref="VSP_010995 VSP_010996 VSP_010999 VSP_011002 VSP_011003"/>
    </isoform>
    <isoform>
        <id>Q7Z5J4-3</id>
        <name>3</name>
        <sequence type="described" ref="VSP_011000 VSP_011001"/>
    </isoform>
    <isoform>
        <id>Q7Z5J4-4</id>
        <name>4</name>
        <sequence type="described" ref="VSP_010997 VSP_010998"/>
    </isoform>
</comment>
<comment type="tissue specificity">
    <text evidence="8">Expressed in all tissues examined with higher expression in the heart and brain. No expression was seen in the corpus callosum of the brain.</text>
</comment>
<comment type="polymorphism">
    <text evidence="5 6">The poly-Gln tract is polymorphic and the number of Gln varies from 12 to 14 (PubMed:11404004). The size of the poly-Gln region may influence the age at onset of spinocerebellar ataxia type 2 (SCA2) (PubMed:10915763).</text>
</comment>
<comment type="disease" evidence="6 7 10">
    <disease id="DI-02313">
        <name>Smith-Magenis syndrome</name>
        <acronym>SMS</acronym>
        <description>Characterized by intellectual disability associated with development and growth delays. Affected persons have characteristic behavioral abnormalities, including self-injurious behaviors and sleep disturbance, and distinct craniofacial and skeletal anomalies.</description>
        <dbReference type="MIM" id="182290"/>
    </disease>
    <text>The disease is caused by variants affecting the gene represented in this entry.</text>
</comment>
<comment type="sequence caution" evidence="14">
    <conflict type="erroneous initiation">
        <sequence resource="EMBL-CDS" id="BAB47449"/>
    </conflict>
    <text>Extended N-terminus.</text>
</comment>
<protein>
    <recommendedName>
        <fullName>Retinoic acid-induced protein 1</fullName>
    </recommendedName>
</protein>
<reference key="1">
    <citation type="journal article" date="2001" name="Gene">
        <title>RAI1 is a novel polyglutamine encoding gene that is deleted in Smith-Magenis syndrome patients.</title>
        <authorList>
            <person name="Seranski P."/>
            <person name="Hoff C."/>
            <person name="Radelof U."/>
            <person name="Henning S."/>
            <person name="Reinhard R."/>
            <person name="Schwartz C.E."/>
            <person name="Heiss N."/>
            <person name="Poustka A."/>
        </authorList>
    </citation>
    <scope>NUCLEOTIDE SEQUENCE [GENOMIC DNA / MRNA] (ISOFORM 2)</scope>
    <scope>POLYMORPHISM OF POLY-GLN REGION</scope>
    <scope>INVOLVEMENT IN SMITH-MAGENIS SYNDROME</scope>
</reference>
<reference key="2">
    <citation type="journal article" date="2003" name="Genomics">
        <title>Molecular cloning and characterization of human RAI1, a gene associated with schizophrenia.</title>
        <authorList>
            <person name="Toulouse A."/>
            <person name="Rochefort D."/>
            <person name="Roussel J."/>
            <person name="Joober R."/>
            <person name="Rouleau G.A."/>
        </authorList>
    </citation>
    <scope>NUCLEOTIDE SEQUENCE [MRNA] (ISOFORM 1)</scope>
    <scope>TISSUE SPECIFICITY</scope>
</reference>
<reference key="3">
    <citation type="journal article" date="2001" name="DNA Res.">
        <title>Prediction of the coding sequences of unidentified human genes. XX. The complete sequences of 100 new cDNA clones from brain which code for large proteins in vitro.</title>
        <authorList>
            <person name="Nagase T."/>
            <person name="Nakayama M."/>
            <person name="Nakajima D."/>
            <person name="Kikuno R."/>
            <person name="Ohara O."/>
        </authorList>
    </citation>
    <scope>NUCLEOTIDE SEQUENCE [LARGE SCALE MRNA] (ISOFORM 3)</scope>
    <source>
        <tissue>Brain</tissue>
    </source>
</reference>
<reference key="4">
    <citation type="journal article" date="2004" name="Genome Res.">
        <title>The status, quality, and expansion of the NIH full-length cDNA project: the Mammalian Gene Collection (MGC).</title>
        <authorList>
            <consortium name="The MGC Project Team"/>
        </authorList>
    </citation>
    <scope>NUCLEOTIDE SEQUENCE [LARGE SCALE MRNA] (ISOFORM 4)</scope>
    <source>
        <tissue>Muscle</tissue>
    </source>
</reference>
<reference key="5">
    <citation type="journal article" date="2007" name="BMC Genomics">
        <title>The full-ORF clone resource of the German cDNA consortium.</title>
        <authorList>
            <person name="Bechtel S."/>
            <person name="Rosenfelder H."/>
            <person name="Duda A."/>
            <person name="Schmidt C.P."/>
            <person name="Ernst U."/>
            <person name="Wellenreuther R."/>
            <person name="Mehrle A."/>
            <person name="Schuster C."/>
            <person name="Bahr A."/>
            <person name="Bloecker H."/>
            <person name="Heubner D."/>
            <person name="Hoerlein A."/>
            <person name="Michel G."/>
            <person name="Wedler H."/>
            <person name="Koehrer K."/>
            <person name="Ottenwaelder B."/>
            <person name="Poustka A."/>
            <person name="Wiemann S."/>
            <person name="Schupp I."/>
        </authorList>
    </citation>
    <scope>NUCLEOTIDE SEQUENCE [LARGE SCALE MRNA] OF 622-1906</scope>
    <source>
        <tissue>Melanoma</tissue>
        <tissue>Testis</tissue>
    </source>
</reference>
<reference key="6">
    <citation type="journal article" date="2003" name="Nat. Genet.">
        <title>Mutations in RAI1 associated with Smith-Magenis syndrome.</title>
        <authorList>
            <person name="Slager R.E."/>
            <person name="Newton T.L."/>
            <person name="Vlangos C.N."/>
            <person name="Finucane B."/>
            <person name="Elsea S.H."/>
        </authorList>
    </citation>
    <scope>INVOLVEMENT IN SMITH-MAGENIS SYNDROME</scope>
</reference>
<reference key="7">
    <citation type="journal article" date="2000" name="Hum. Mol. Genet.">
        <title>CAG repeat length in RAI1 is associated with age at onset variability in spinocerebellar ataxia type 2 (SCA2).</title>
        <authorList>
            <person name="Hayes S."/>
            <person name="Turecki G."/>
            <person name="Brisebois K."/>
            <person name="Lopes-Cendes I."/>
            <person name="Gaspar C."/>
            <person name="Riess O."/>
            <person name="Ranum L.P."/>
            <person name="Pulst S.M."/>
            <person name="Rouleau G.A."/>
        </authorList>
    </citation>
    <scope>ROLE OF THE POLY-GLN REGION IN SPINOCEREBELLAR ATAXIA TYPE 2</scope>
</reference>
<reference key="8">
    <citation type="journal article" date="2008" name="J. Proteome Res.">
        <title>Combining protein-based IMAC, peptide-based IMAC, and MudPIT for efficient phosphoproteomic analysis.</title>
        <authorList>
            <person name="Cantin G.T."/>
            <person name="Yi W."/>
            <person name="Lu B."/>
            <person name="Park S.K."/>
            <person name="Xu T."/>
            <person name="Lee J.-D."/>
            <person name="Yates J.R. III"/>
        </authorList>
    </citation>
    <scope>IDENTIFICATION BY MASS SPECTROMETRY [LARGE SCALE ANALYSIS]</scope>
    <source>
        <tissue>Cervix carcinoma</tissue>
    </source>
</reference>
<reference key="9">
    <citation type="journal article" date="2008" name="Proc. Natl. Acad. Sci. U.S.A.">
        <title>A quantitative atlas of mitotic phosphorylation.</title>
        <authorList>
            <person name="Dephoure N."/>
            <person name="Zhou C."/>
            <person name="Villen J."/>
            <person name="Beausoleil S.A."/>
            <person name="Bakalarski C.E."/>
            <person name="Elledge S.J."/>
            <person name="Gygi S.P."/>
        </authorList>
    </citation>
    <scope>PHOSPHORYLATION [LARGE SCALE ANALYSIS] AT SER-683; THR-696; SER-880; SER-892; SER-1122; SER-1352; SER-1358; SER-1374 AND SER-1431</scope>
    <scope>IDENTIFICATION BY MASS SPECTROMETRY [LARGE SCALE ANALYSIS]</scope>
    <source>
        <tissue>Cervix carcinoma</tissue>
    </source>
</reference>
<reference key="10">
    <citation type="journal article" date="2009" name="Anal. Chem.">
        <title>Lys-N and trypsin cover complementary parts of the phosphoproteome in a refined SCX-based approach.</title>
        <authorList>
            <person name="Gauci S."/>
            <person name="Helbig A.O."/>
            <person name="Slijper M."/>
            <person name="Krijgsveld J."/>
            <person name="Heck A.J."/>
            <person name="Mohammed S."/>
        </authorList>
    </citation>
    <scope>IDENTIFICATION BY MASS SPECTROMETRY [LARGE SCALE ANALYSIS]</scope>
</reference>
<reference key="11">
    <citation type="journal article" date="2009" name="Sci. Signal.">
        <title>Quantitative phosphoproteomic analysis of T cell receptor signaling reveals system-wide modulation of protein-protein interactions.</title>
        <authorList>
            <person name="Mayya V."/>
            <person name="Lundgren D.H."/>
            <person name="Hwang S.-I."/>
            <person name="Rezaul K."/>
            <person name="Wu L."/>
            <person name="Eng J.K."/>
            <person name="Rodionov V."/>
            <person name="Han D.K."/>
        </authorList>
    </citation>
    <scope>PHOSPHORYLATION [LARGE SCALE ANALYSIS] AT SER-683; SER-1064; THR-1068 AND SER-1374</scope>
    <scope>IDENTIFICATION BY MASS SPECTROMETRY [LARGE SCALE ANALYSIS]</scope>
    <source>
        <tissue>Leukemic T-cell</tissue>
    </source>
</reference>
<reference key="12">
    <citation type="journal article" date="2010" name="Sci. Signal.">
        <title>Quantitative phosphoproteomics reveals widespread full phosphorylation site occupancy during mitosis.</title>
        <authorList>
            <person name="Olsen J.V."/>
            <person name="Vermeulen M."/>
            <person name="Santamaria A."/>
            <person name="Kumar C."/>
            <person name="Miller M.L."/>
            <person name="Jensen L.J."/>
            <person name="Gnad F."/>
            <person name="Cox J."/>
            <person name="Jensen T.S."/>
            <person name="Nigg E.A."/>
            <person name="Brunak S."/>
            <person name="Mann M."/>
        </authorList>
    </citation>
    <scope>PHOSPHORYLATION [LARGE SCALE ANALYSIS] AT SER-568; SER-683; SER-1352; SER-1358 AND SER-1374</scope>
    <scope>IDENTIFICATION BY MASS SPECTROMETRY [LARGE SCALE ANALYSIS]</scope>
    <source>
        <tissue>Cervix carcinoma</tissue>
    </source>
</reference>
<reference key="13">
    <citation type="journal article" date="2012" name="Am. J. Hum. Genet.">
        <title>Smith-Magenis syndrome results in disruption of CLOCK gene transcription and reveals an integral role for RAI1 in the maintenance of circadian rhythmicity.</title>
        <authorList>
            <person name="Williams S.R."/>
            <person name="Zies D."/>
            <person name="Mullegama S.V."/>
            <person name="Grotewiel M.S."/>
            <person name="Elsea S.H."/>
        </authorList>
    </citation>
    <scope>FUNCTION</scope>
</reference>
<reference key="14">
    <citation type="journal article" date="2013" name="J. Proteome Res.">
        <title>Toward a comprehensive characterization of a human cancer cell phosphoproteome.</title>
        <authorList>
            <person name="Zhou H."/>
            <person name="Di Palma S."/>
            <person name="Preisinger C."/>
            <person name="Peng M."/>
            <person name="Polat A.N."/>
            <person name="Heck A.J."/>
            <person name="Mohammed S."/>
        </authorList>
    </citation>
    <scope>PHOSPHORYLATION [LARGE SCALE ANALYSIS] AT SER-339; SER-345; THR-472; SER-805; SER-1064; SER-1122; SER-1358; SER-1374 AND SER-1431</scope>
    <scope>IDENTIFICATION BY MASS SPECTROMETRY [LARGE SCALE ANALYSIS]</scope>
    <source>
        <tissue>Cervix carcinoma</tissue>
        <tissue>Erythroleukemia</tissue>
    </source>
</reference>
<reference key="15">
    <citation type="journal article" date="2014" name="Proc. Natl. Acad. Sci. U.S.A.">
        <title>Mapping of SUMO sites and analysis of SUMOylation changes induced by external stimuli.</title>
        <authorList>
            <person name="Impens F."/>
            <person name="Radoshevich L."/>
            <person name="Cossart P."/>
            <person name="Ribet D."/>
        </authorList>
    </citation>
    <scope>SUMOYLATION [LARGE SCALE ANALYSIS] AT LYS-819 AND LYS-901</scope>
    <scope>IDENTIFICATION BY MASS SPECTROMETRY [LARGE SCALE ANALYSIS]</scope>
</reference>
<reference key="16">
    <citation type="journal article" date="2017" name="Nat. Struct. Mol. Biol.">
        <title>Site-specific mapping of the human SUMO proteome reveals co-modification with phosphorylation.</title>
        <authorList>
            <person name="Hendriks I.A."/>
            <person name="Lyon D."/>
            <person name="Young C."/>
            <person name="Jensen L.J."/>
            <person name="Vertegaal A.C."/>
            <person name="Nielsen M.L."/>
        </authorList>
    </citation>
    <scope>SUMOYLATION [LARGE SCALE ANALYSIS] AT LYS-811; LYS-901 AND LYS-1425</scope>
    <scope>IDENTIFICATION BY MASS SPECTROMETRY [LARGE SCALE ANALYSIS]</scope>
</reference>
<reference key="17">
    <citation type="journal article" date="2014" name="Mol. Genet. Metab.">
        <title>Three rare diseases in one sib pair: RAI1, PCK1, GRIN2B mutations associated with Smith-Magenis Syndrome, cytosolic PEPCK deficiency and NMDA receptor glutamate insensitivity.</title>
        <authorList>
            <person name="Adams D.R."/>
            <person name="Yuan H."/>
            <person name="Holyoak T."/>
            <person name="Arajs K.H."/>
            <person name="Hakimi P."/>
            <person name="Markello T.C."/>
            <person name="Wolfe L.A."/>
            <person name="Vilboux T."/>
            <person name="Burton B.K."/>
            <person name="Fajardo K.F."/>
            <person name="Grahame G."/>
            <person name="Holloman C."/>
            <person name="Sincan M."/>
            <person name="Smith A.C."/>
            <person name="Wells G.A."/>
            <person name="Huang Y."/>
            <person name="Vega H."/>
            <person name="Snyder J.P."/>
            <person name="Golas G.A."/>
            <person name="Tifft C.J."/>
            <person name="Boerkoel C.F."/>
            <person name="Hanson R.W."/>
            <person name="Traynelis S.F."/>
            <person name="Kerr D.S."/>
            <person name="Gahl W.A."/>
        </authorList>
    </citation>
    <scope>VARIANT SMS 758-TRP--PRO-1906 DEL</scope>
</reference>
<organism>
    <name type="scientific">Homo sapiens</name>
    <name type="common">Human</name>
    <dbReference type="NCBI Taxonomy" id="9606"/>
    <lineage>
        <taxon>Eukaryota</taxon>
        <taxon>Metazoa</taxon>
        <taxon>Chordata</taxon>
        <taxon>Craniata</taxon>
        <taxon>Vertebrata</taxon>
        <taxon>Euteleostomi</taxon>
        <taxon>Mammalia</taxon>
        <taxon>Eutheria</taxon>
        <taxon>Euarchontoglires</taxon>
        <taxon>Primates</taxon>
        <taxon>Haplorrhini</taxon>
        <taxon>Catarrhini</taxon>
        <taxon>Hominidae</taxon>
        <taxon>Homo</taxon>
    </lineage>
</organism>
<dbReference type="EMBL" id="AJ271790">
    <property type="protein sequence ID" value="CAC20423.1"/>
    <property type="molecule type" value="mRNA"/>
</dbReference>
<dbReference type="EMBL" id="AJ271791">
    <property type="protein sequence ID" value="CAC20424.1"/>
    <property type="molecule type" value="Genomic_DNA"/>
</dbReference>
<dbReference type="EMBL" id="AY172136">
    <property type="protein sequence ID" value="AAO31738.1"/>
    <property type="molecule type" value="mRNA"/>
</dbReference>
<dbReference type="EMBL" id="AB058723">
    <property type="protein sequence ID" value="BAB47449.1"/>
    <property type="status" value="ALT_INIT"/>
    <property type="molecule type" value="mRNA"/>
</dbReference>
<dbReference type="EMBL" id="BC021209">
    <property type="protein sequence ID" value="AAH21209.1"/>
    <property type="molecule type" value="mRNA"/>
</dbReference>
<dbReference type="EMBL" id="AL133649">
    <property type="protein sequence ID" value="CAB63768.1"/>
    <property type="molecule type" value="mRNA"/>
</dbReference>
<dbReference type="EMBL" id="AL834468">
    <property type="protein sequence ID" value="CAD39127.1"/>
    <property type="molecule type" value="mRNA"/>
</dbReference>
<dbReference type="EMBL" id="AL834486">
    <property type="protein sequence ID" value="CAD39144.1"/>
    <property type="molecule type" value="mRNA"/>
</dbReference>
<dbReference type="CCDS" id="CCDS11188.1">
    <molecule id="Q7Z5J4-1"/>
</dbReference>
<dbReference type="PIR" id="T43490">
    <property type="entry name" value="T43490"/>
</dbReference>
<dbReference type="RefSeq" id="NP_109590.3">
    <molecule id="Q7Z5J4-1"/>
    <property type="nucleotide sequence ID" value="NM_030665.3"/>
</dbReference>
<dbReference type="RefSeq" id="XP_016879516.2">
    <molecule id="Q7Z5J4-1"/>
    <property type="nucleotide sequence ID" value="XM_017024027.2"/>
</dbReference>
<dbReference type="RefSeq" id="XP_016879517.2">
    <molecule id="Q7Z5J4-1"/>
    <property type="nucleotide sequence ID" value="XM_017024028.3"/>
</dbReference>
<dbReference type="RefSeq" id="XP_047291105.1">
    <molecule id="Q7Z5J4-1"/>
    <property type="nucleotide sequence ID" value="XM_047435149.1"/>
</dbReference>
<dbReference type="RefSeq" id="XP_047291106.1">
    <molecule id="Q7Z5J4-1"/>
    <property type="nucleotide sequence ID" value="XM_047435150.1"/>
</dbReference>
<dbReference type="RefSeq" id="XP_047291107.1">
    <molecule id="Q7Z5J4-1"/>
    <property type="nucleotide sequence ID" value="XM_047435151.1"/>
</dbReference>
<dbReference type="RefSeq" id="XP_047291108.1">
    <molecule id="Q7Z5J4-1"/>
    <property type="nucleotide sequence ID" value="XM_047435152.1"/>
</dbReference>
<dbReference type="RefSeq" id="XP_047291109.1">
    <molecule id="Q7Z5J4-1"/>
    <property type="nucleotide sequence ID" value="XM_047435153.1"/>
</dbReference>
<dbReference type="SMR" id="Q7Z5J4"/>
<dbReference type="BioGRID" id="115966">
    <property type="interactions" value="98"/>
</dbReference>
<dbReference type="FunCoup" id="Q7Z5J4">
    <property type="interactions" value="2420"/>
</dbReference>
<dbReference type="IntAct" id="Q7Z5J4">
    <property type="interactions" value="55"/>
</dbReference>
<dbReference type="MINT" id="Q7Z5J4"/>
<dbReference type="STRING" id="9606.ENSP00000323074"/>
<dbReference type="GlyGen" id="Q7Z5J4">
    <property type="glycosylation" value="10 sites, 1 O-linked glycan (6 sites)"/>
</dbReference>
<dbReference type="iPTMnet" id="Q7Z5J4"/>
<dbReference type="PhosphoSitePlus" id="Q7Z5J4"/>
<dbReference type="SwissPalm" id="Q7Z5J4"/>
<dbReference type="BioMuta" id="RAI1"/>
<dbReference type="DMDM" id="50400978"/>
<dbReference type="jPOST" id="Q7Z5J4"/>
<dbReference type="MassIVE" id="Q7Z5J4"/>
<dbReference type="PaxDb" id="9606-ENSP00000323074"/>
<dbReference type="PeptideAtlas" id="Q7Z5J4"/>
<dbReference type="ProteomicsDB" id="69303">
    <molecule id="Q7Z5J4-1"/>
</dbReference>
<dbReference type="ProteomicsDB" id="69304">
    <molecule id="Q7Z5J4-2"/>
</dbReference>
<dbReference type="ProteomicsDB" id="69305">
    <molecule id="Q7Z5J4-3"/>
</dbReference>
<dbReference type="ProteomicsDB" id="69306">
    <molecule id="Q7Z5J4-4"/>
</dbReference>
<dbReference type="Pumba" id="Q7Z5J4"/>
<dbReference type="Antibodypedia" id="25487">
    <property type="antibodies" value="84 antibodies from 15 providers"/>
</dbReference>
<dbReference type="DNASU" id="10743"/>
<dbReference type="Ensembl" id="ENST00000353383.6">
    <molecule id="Q7Z5J4-1"/>
    <property type="protein sequence ID" value="ENSP00000323074.4"/>
    <property type="gene ID" value="ENSG00000108557.20"/>
</dbReference>
<dbReference type="GeneID" id="10743"/>
<dbReference type="KEGG" id="hsa:10743"/>
<dbReference type="MANE-Select" id="ENST00000353383.6">
    <property type="protein sequence ID" value="ENSP00000323074.4"/>
    <property type="RefSeq nucleotide sequence ID" value="NM_030665.4"/>
    <property type="RefSeq protein sequence ID" value="NP_109590.3"/>
</dbReference>
<dbReference type="UCSC" id="uc002grm.4">
    <molecule id="Q7Z5J4-1"/>
    <property type="organism name" value="human"/>
</dbReference>
<dbReference type="AGR" id="HGNC:9834"/>
<dbReference type="CTD" id="10743"/>
<dbReference type="DisGeNET" id="10743"/>
<dbReference type="GeneCards" id="RAI1"/>
<dbReference type="GeneReviews" id="RAI1"/>
<dbReference type="HGNC" id="HGNC:9834">
    <property type="gene designation" value="RAI1"/>
</dbReference>
<dbReference type="HPA" id="ENSG00000108557">
    <property type="expression patterns" value="Low tissue specificity"/>
</dbReference>
<dbReference type="MalaCards" id="RAI1"/>
<dbReference type="MIM" id="182290">
    <property type="type" value="phenotype"/>
</dbReference>
<dbReference type="MIM" id="607642">
    <property type="type" value="gene"/>
</dbReference>
<dbReference type="neXtProt" id="NX_Q7Z5J4"/>
<dbReference type="OpenTargets" id="ENSG00000108557"/>
<dbReference type="Orphanet" id="1713">
    <property type="disease" value="17p11.2 microduplication syndrome"/>
</dbReference>
<dbReference type="Orphanet" id="477817">
    <property type="disease" value="PMP22-RAI1 contiguous gene duplication syndrome"/>
</dbReference>
<dbReference type="Orphanet" id="819">
    <property type="disease" value="Smith-Magenis syndrome"/>
</dbReference>
<dbReference type="PharmGKB" id="PA34188"/>
<dbReference type="VEuPathDB" id="HostDB:ENSG00000108557"/>
<dbReference type="eggNOG" id="KOG1084">
    <property type="taxonomic scope" value="Eukaryota"/>
</dbReference>
<dbReference type="GeneTree" id="ENSGT00940000156922"/>
<dbReference type="HOGENOM" id="CLU_002579_1_0_1"/>
<dbReference type="InParanoid" id="Q7Z5J4"/>
<dbReference type="OMA" id="DCFPDTA"/>
<dbReference type="OrthoDB" id="10029243at2759"/>
<dbReference type="PAN-GO" id="Q7Z5J4">
    <property type="GO annotations" value="3 GO annotations based on evolutionary models"/>
</dbReference>
<dbReference type="PhylomeDB" id="Q7Z5J4"/>
<dbReference type="TreeFam" id="TF331317"/>
<dbReference type="PathwayCommons" id="Q7Z5J4"/>
<dbReference type="Reactome" id="R-HSA-400253">
    <property type="pathway name" value="Circadian Clock"/>
</dbReference>
<dbReference type="Reactome" id="R-HSA-9707616">
    <property type="pathway name" value="Heme signaling"/>
</dbReference>
<dbReference type="SignaLink" id="Q7Z5J4"/>
<dbReference type="SIGNOR" id="Q7Z5J4"/>
<dbReference type="BioGRID-ORCS" id="10743">
    <property type="hits" value="29 hits in 1171 CRISPR screens"/>
</dbReference>
<dbReference type="ChiTaRS" id="RAI1">
    <property type="organism name" value="human"/>
</dbReference>
<dbReference type="GenomeRNAi" id="10743"/>
<dbReference type="Pharos" id="Q7Z5J4">
    <property type="development level" value="Tbio"/>
</dbReference>
<dbReference type="PRO" id="PR:Q7Z5J4"/>
<dbReference type="Proteomes" id="UP000005640">
    <property type="component" value="Chromosome 17"/>
</dbReference>
<dbReference type="RNAct" id="Q7Z5J4">
    <property type="molecule type" value="protein"/>
</dbReference>
<dbReference type="Bgee" id="ENSG00000108557">
    <property type="expression patterns" value="Expressed in pigmented layer of retina and 184 other cell types or tissues"/>
</dbReference>
<dbReference type="ExpressionAtlas" id="Q7Z5J4">
    <property type="expression patterns" value="baseline and differential"/>
</dbReference>
<dbReference type="GO" id="GO:0005737">
    <property type="term" value="C:cytoplasm"/>
    <property type="evidence" value="ECO:0007669"/>
    <property type="project" value="UniProtKB-SubCell"/>
</dbReference>
<dbReference type="GO" id="GO:0005654">
    <property type="term" value="C:nucleoplasm"/>
    <property type="evidence" value="ECO:0000314"/>
    <property type="project" value="HPA"/>
</dbReference>
<dbReference type="GO" id="GO:0005634">
    <property type="term" value="C:nucleus"/>
    <property type="evidence" value="ECO:0000318"/>
    <property type="project" value="GO_Central"/>
</dbReference>
<dbReference type="GO" id="GO:0008270">
    <property type="term" value="F:zinc ion binding"/>
    <property type="evidence" value="ECO:0007669"/>
    <property type="project" value="UniProtKB-KW"/>
</dbReference>
<dbReference type="GO" id="GO:0032922">
    <property type="term" value="P:circadian regulation of gene expression"/>
    <property type="evidence" value="ECO:0000315"/>
    <property type="project" value="UniProtKB"/>
</dbReference>
<dbReference type="GO" id="GO:0040015">
    <property type="term" value="P:negative regulation of multicellular organism growth"/>
    <property type="evidence" value="ECO:0007669"/>
    <property type="project" value="Ensembl"/>
</dbReference>
<dbReference type="GO" id="GO:0045893">
    <property type="term" value="P:positive regulation of DNA-templated transcription"/>
    <property type="evidence" value="ECO:0000314"/>
    <property type="project" value="UniProtKB"/>
</dbReference>
<dbReference type="GO" id="GO:0006357">
    <property type="term" value="P:regulation of transcription by RNA polymerase II"/>
    <property type="evidence" value="ECO:0000318"/>
    <property type="project" value="GO_Central"/>
</dbReference>
<dbReference type="GO" id="GO:0001501">
    <property type="term" value="P:skeletal system development"/>
    <property type="evidence" value="ECO:0007669"/>
    <property type="project" value="Ensembl"/>
</dbReference>
<dbReference type="CDD" id="cd15700">
    <property type="entry name" value="ePHD_RAI1"/>
    <property type="match status" value="1"/>
</dbReference>
<dbReference type="FunFam" id="3.30.40.10:FF:000116">
    <property type="entry name" value="Transcription factor 20 (AR1)"/>
    <property type="match status" value="1"/>
</dbReference>
<dbReference type="Gene3D" id="3.30.40.10">
    <property type="entry name" value="Zinc/RING finger domain, C3HC4 (zinc finger)"/>
    <property type="match status" value="1"/>
</dbReference>
<dbReference type="InterPro" id="IPR034732">
    <property type="entry name" value="EPHD"/>
</dbReference>
<dbReference type="InterPro" id="IPR052440">
    <property type="entry name" value="Trans_Reg/Chrom_Remod"/>
</dbReference>
<dbReference type="InterPro" id="IPR001965">
    <property type="entry name" value="Znf_PHD"/>
</dbReference>
<dbReference type="InterPro" id="IPR013083">
    <property type="entry name" value="Znf_RING/FYVE/PHD"/>
</dbReference>
<dbReference type="PANTHER" id="PTHR14955">
    <property type="entry name" value="RETINOIC ACID INDUCED 1/TRANSCRIPTION FACTOR 20"/>
    <property type="match status" value="1"/>
</dbReference>
<dbReference type="PANTHER" id="PTHR14955:SF6">
    <property type="entry name" value="RETINOIC ACID-INDUCED PROTEIN 1"/>
    <property type="match status" value="1"/>
</dbReference>
<dbReference type="Pfam" id="PF13771">
    <property type="entry name" value="zf-HC5HC2H"/>
    <property type="match status" value="1"/>
</dbReference>
<dbReference type="SMART" id="SM00249">
    <property type="entry name" value="PHD"/>
    <property type="match status" value="1"/>
</dbReference>
<dbReference type="PROSITE" id="PS51805">
    <property type="entry name" value="EPHD"/>
    <property type="match status" value="1"/>
</dbReference>
<keyword id="KW-0010">Activator</keyword>
<keyword id="KW-0025">Alternative splicing</keyword>
<keyword id="KW-0090">Biological rhythms</keyword>
<keyword id="KW-0963">Cytoplasm</keyword>
<keyword id="KW-1017">Isopeptide bond</keyword>
<keyword id="KW-0479">Metal-binding</keyword>
<keyword id="KW-0539">Nucleus</keyword>
<keyword id="KW-0597">Phosphoprotein</keyword>
<keyword id="KW-1267">Proteomics identification</keyword>
<keyword id="KW-1185">Reference proteome</keyword>
<keyword id="KW-0818">Triplet repeat expansion</keyword>
<keyword id="KW-0832">Ubl conjugation</keyword>
<keyword id="KW-0862">Zinc</keyword>
<keyword id="KW-0863">Zinc-finger</keyword>
<feature type="chain" id="PRO_0000097159" description="Retinoic acid-induced protein 1">
    <location>
        <begin position="1"/>
        <end position="1906"/>
    </location>
</feature>
<feature type="zinc finger region" description="C2HC pre-PHD-type" evidence="3">
    <location>
        <begin position="1780"/>
        <end position="1835"/>
    </location>
</feature>
<feature type="zinc finger region" description="PHD-type" evidence="3">
    <location>
        <begin position="1855"/>
        <end position="1903"/>
    </location>
</feature>
<feature type="region of interest" description="Disordered" evidence="4">
    <location>
        <begin position="1"/>
        <end position="261"/>
    </location>
</feature>
<feature type="region of interest" description="Disordered" evidence="4">
    <location>
        <begin position="273"/>
        <end position="299"/>
    </location>
</feature>
<feature type="region of interest" description="Disordered" evidence="4">
    <location>
        <begin position="335"/>
        <end position="370"/>
    </location>
</feature>
<feature type="region of interest" description="Disordered" evidence="4">
    <location>
        <begin position="469"/>
        <end position="520"/>
    </location>
</feature>
<feature type="region of interest" description="Disordered" evidence="4">
    <location>
        <begin position="538"/>
        <end position="571"/>
    </location>
</feature>
<feature type="region of interest" description="Disordered" evidence="4">
    <location>
        <begin position="656"/>
        <end position="712"/>
    </location>
</feature>
<feature type="region of interest" description="Disordered" evidence="4">
    <location>
        <begin position="937"/>
        <end position="1299"/>
    </location>
</feature>
<feature type="region of interest" description="Disordered" evidence="4">
    <location>
        <begin position="1344"/>
        <end position="1570"/>
    </location>
</feature>
<feature type="region of interest" description="Disordered" evidence="4">
    <location>
        <begin position="1613"/>
        <end position="1637"/>
    </location>
</feature>
<feature type="region of interest" description="Disordered" evidence="4">
    <location>
        <begin position="1746"/>
        <end position="1775"/>
    </location>
</feature>
<feature type="region of interest" description="Disordered" evidence="4">
    <location>
        <begin position="1794"/>
        <end position="1819"/>
    </location>
</feature>
<feature type="short sequence motif" description="Nuclear localization signal" evidence="2">
    <location>
        <begin position="1160"/>
        <end position="1177"/>
    </location>
</feature>
<feature type="short sequence motif" description="Nuclear localization signal" evidence="2">
    <location>
        <begin position="1223"/>
        <end position="1240"/>
    </location>
</feature>
<feature type="compositionally biased region" description="Polar residues" evidence="4">
    <location>
        <begin position="13"/>
        <end position="24"/>
    </location>
</feature>
<feature type="compositionally biased region" description="Low complexity" evidence="4">
    <location>
        <begin position="66"/>
        <end position="75"/>
    </location>
</feature>
<feature type="compositionally biased region" description="Pro residues" evidence="4">
    <location>
        <begin position="124"/>
        <end position="134"/>
    </location>
</feature>
<feature type="compositionally biased region" description="Low complexity" evidence="4">
    <location>
        <begin position="213"/>
        <end position="226"/>
    </location>
</feature>
<feature type="compositionally biased region" description="Polar residues" evidence="4">
    <location>
        <begin position="252"/>
        <end position="261"/>
    </location>
</feature>
<feature type="compositionally biased region" description="Low complexity" evidence="4">
    <location>
        <begin position="278"/>
        <end position="291"/>
    </location>
</feature>
<feature type="compositionally biased region" description="Low complexity" evidence="4">
    <location>
        <begin position="339"/>
        <end position="353"/>
    </location>
</feature>
<feature type="compositionally biased region" description="Polar residues" evidence="4">
    <location>
        <begin position="541"/>
        <end position="563"/>
    </location>
</feature>
<feature type="compositionally biased region" description="Polar residues" evidence="4">
    <location>
        <begin position="937"/>
        <end position="947"/>
    </location>
</feature>
<feature type="compositionally biased region" description="Basic and acidic residues" evidence="4">
    <location>
        <begin position="950"/>
        <end position="962"/>
    </location>
</feature>
<feature type="compositionally biased region" description="Basic residues" evidence="4">
    <location>
        <begin position="996"/>
        <end position="1005"/>
    </location>
</feature>
<feature type="compositionally biased region" description="Low complexity" evidence="4">
    <location>
        <begin position="1101"/>
        <end position="1119"/>
    </location>
</feature>
<feature type="compositionally biased region" description="Low complexity" evidence="4">
    <location>
        <begin position="1242"/>
        <end position="1252"/>
    </location>
</feature>
<feature type="compositionally biased region" description="Basic residues" evidence="4">
    <location>
        <begin position="1444"/>
        <end position="1453"/>
    </location>
</feature>
<feature type="compositionally biased region" description="Polar residues" evidence="4">
    <location>
        <begin position="1482"/>
        <end position="1491"/>
    </location>
</feature>
<feature type="compositionally biased region" description="Polar residues" evidence="4">
    <location>
        <begin position="1517"/>
        <end position="1534"/>
    </location>
</feature>
<feature type="compositionally biased region" description="Basic residues" evidence="4">
    <location>
        <begin position="1535"/>
        <end position="1545"/>
    </location>
</feature>
<feature type="compositionally biased region" description="Low complexity" evidence="4">
    <location>
        <begin position="1628"/>
        <end position="1637"/>
    </location>
</feature>
<feature type="compositionally biased region" description="Basic and acidic residues" evidence="4">
    <location>
        <begin position="1798"/>
        <end position="1812"/>
    </location>
</feature>
<feature type="modified residue" description="Phosphoserine" evidence="18">
    <location>
        <position position="339"/>
    </location>
</feature>
<feature type="modified residue" description="Phosphoserine" evidence="18">
    <location>
        <position position="345"/>
    </location>
</feature>
<feature type="modified residue" description="Phosphothreonine" evidence="18">
    <location>
        <position position="472"/>
    </location>
</feature>
<feature type="modified residue" description="Phosphoserine" evidence="17">
    <location>
        <position position="568"/>
    </location>
</feature>
<feature type="modified residue" description="Phosphoserine" evidence="15 16 17">
    <location>
        <position position="683"/>
    </location>
</feature>
<feature type="modified residue" description="Phosphothreonine" evidence="15">
    <location>
        <position position="696"/>
    </location>
</feature>
<feature type="modified residue" description="Phosphoserine" evidence="18">
    <location>
        <position position="805"/>
    </location>
</feature>
<feature type="modified residue" description="Phosphoserine" evidence="15">
    <location>
        <position position="880"/>
    </location>
</feature>
<feature type="modified residue" description="Phosphoserine" evidence="15">
    <location>
        <position position="892"/>
    </location>
</feature>
<feature type="modified residue" description="Phosphoserine" evidence="16 18">
    <location>
        <position position="1064"/>
    </location>
</feature>
<feature type="modified residue" description="Phosphothreonine" evidence="16">
    <location>
        <position position="1068"/>
    </location>
</feature>
<feature type="modified residue" description="Phosphoserine" evidence="15 18">
    <location>
        <position position="1122"/>
    </location>
</feature>
<feature type="modified residue" description="Phosphoserine" evidence="15 17">
    <location>
        <position position="1352"/>
    </location>
</feature>
<feature type="modified residue" description="Phosphoserine" evidence="15 17 18">
    <location>
        <position position="1358"/>
    </location>
</feature>
<feature type="modified residue" description="Phosphoserine" evidence="15 16 17 18">
    <location>
        <position position="1374"/>
    </location>
</feature>
<feature type="modified residue" description="Phosphoserine" evidence="15 18">
    <location>
        <position position="1431"/>
    </location>
</feature>
<feature type="cross-link" description="Glycyl lysine isopeptide (Lys-Gly) (interchain with G-Cter in SUMO2)" evidence="20">
    <location>
        <position position="811"/>
    </location>
</feature>
<feature type="cross-link" description="Glycyl lysine isopeptide (Lys-Gly) (interchain with G-Cter in SUMO1)" evidence="19">
    <location>
        <position position="819"/>
    </location>
</feature>
<feature type="cross-link" description="Glycyl lysine isopeptide (Lys-Gly) (interchain with G-Cter in SUMO1); alternate" evidence="19">
    <location>
        <position position="901"/>
    </location>
</feature>
<feature type="cross-link" description="Glycyl lysine isopeptide (Lys-Gly) (interchain with G-Cter in SUMO2); alternate" evidence="19 20">
    <location>
        <position position="901"/>
    </location>
</feature>
<feature type="cross-link" description="Glycyl lysine isopeptide (Lys-Gly) (interchain with G-Cter in SUMO2)" evidence="20">
    <location>
        <position position="1425"/>
    </location>
</feature>
<feature type="splice variant" id="VSP_010995" description="In isoform 2." evidence="12">
    <original>THFPQHSQSFPTSSTYSSSVQGGGQGA</original>
    <variation>WWAGG</variation>
    <location>
        <begin position="207"/>
        <end position="233"/>
    </location>
</feature>
<feature type="splice variant" id="VSP_010996" description="In isoform 2." evidence="12">
    <original>VDTQAGNCKPLQKDKLPENLLSDLSLQS</original>
    <variation>PAD</variation>
    <location>
        <begin position="407"/>
        <end position="434"/>
    </location>
</feature>
<feature type="splice variant" id="VSP_010997" description="In isoform 4." evidence="13">
    <original>SHMKPGEEGPDGERAPGDST</original>
    <variation>YSVYICIHIHIYNIYEDCKC</variation>
    <location>
        <begin position="947"/>
        <end position="966"/>
    </location>
</feature>
<feature type="splice variant" id="VSP_010998" description="In isoform 4." evidence="13">
    <location>
        <begin position="967"/>
        <end position="1906"/>
    </location>
</feature>
<feature type="splice variant" id="VSP_010999" description="In isoform 2." evidence="12">
    <location>
        <begin position="1415"/>
        <end position="1479"/>
    </location>
</feature>
<feature type="splice variant" id="VSP_011000" description="In isoform 3." evidence="11">
    <original>FVRVEKRDAFTTICTVVNSPGDAPKPHRKPSSSASSSSSSSSF</original>
    <variation>LEPSLGAQNPRSGQNAPPAPADARPLCTTRDRRAYSAREQGQR</variation>
    <location>
        <begin position="1598"/>
        <end position="1640"/>
    </location>
</feature>
<feature type="splice variant" id="VSP_011001" description="In isoform 3." evidence="11">
    <location>
        <begin position="1641"/>
        <end position="1906"/>
    </location>
</feature>
<feature type="splice variant" id="VSP_011002" description="In isoform 2." evidence="12">
    <location>
        <begin position="1803"/>
        <end position="1821"/>
    </location>
</feature>
<feature type="splice variant" id="VSP_011003" description="In isoform 2." evidence="12">
    <original>MCSSCQEAGATIGCCHKGCLHTYHYPCASDAGCIFIEENFSLKCPKHKRLP</original>
    <variation>HGGTVALAPGDFSLPGLRFASLFQGPSWCDCPVLATSTPSSWSRCVPAAKKPGPPLGAATKDASTPTTTRVPAMQVRARPGTGGHWSPSKQSRGTLPGHSSPNPGPISLFSFPPLLPQQFFYPSVCLDLCWAMPGTWK</variation>
    <location>
        <begin position="1856"/>
        <end position="1906"/>
    </location>
</feature>
<feature type="sequence variant" id="VAR_051300" description="In dbSNP:rs3803763.">
    <original>G</original>
    <variation>A</variation>
    <location>
        <position position="90"/>
    </location>
</feature>
<feature type="sequence variant" id="VAR_024344" description="In dbSNP:rs11649804.">
    <original>P</original>
    <variation>T</variation>
    <location>
        <position position="165"/>
    </location>
</feature>
<feature type="sequence variant" id="VAR_079636" description="In SMS." evidence="10">
    <location>
        <begin position="758"/>
        <end position="1906"/>
    </location>
</feature>
<feature type="sequence variant" id="VAR_051301" description="In dbSNP:rs1759075.">
    <original>Q</original>
    <variation>P</variation>
    <location>
        <position position="939"/>
    </location>
</feature>
<feature type="sequence conflict" description="In Ref. 2; AAO31738." evidence="14" ref="2">
    <original>S</original>
    <variation>L</variation>
    <location>
        <position position="440"/>
    </location>
</feature>
<feature type="sequence conflict" description="In Ref. 2; AAO31738." evidence="14" ref="2">
    <original>L</original>
    <variation>F</variation>
    <location>
        <position position="1302"/>
    </location>
</feature>
<feature type="sequence conflict" description="In Ref. 2; AAO31738." evidence="14" ref="2">
    <original>G</original>
    <variation>A</variation>
    <location>
        <position position="1513"/>
    </location>
</feature>
<feature type="sequence conflict" description="In Ref. 5; CAD39144." evidence="14" ref="5">
    <original>T</original>
    <variation>A</variation>
    <location>
        <position position="1682"/>
    </location>
</feature>
<name>RAI1_HUMAN</name>
<accession>Q7Z5J4</accession>
<accession>Q8N3B4</accession>
<accession>Q8ND08</accession>
<accession>Q8WU64</accession>
<accession>Q96JK5</accession>
<accession>Q9H1C1</accession>
<accession>Q9H1C2</accession>
<accession>Q9UF69</accession>
<proteinExistence type="evidence at protein level"/>
<gene>
    <name type="primary">RAI1</name>
    <name type="synonym">KIAA1820</name>
</gene>